<feature type="chain" id="PRO_0000093749" description="GMP reductase">
    <location>
        <begin position="1"/>
        <end position="327"/>
    </location>
</feature>
<feature type="active site" description="Thioimidate intermediate" evidence="1">
    <location>
        <position position="175"/>
    </location>
</feature>
<feature type="binding site" evidence="1">
    <location>
        <begin position="204"/>
        <end position="227"/>
    </location>
    <ligand>
        <name>NADP(+)</name>
        <dbReference type="ChEBI" id="CHEBI:58349"/>
    </ligand>
</feature>
<organism>
    <name type="scientific">Bacillus cereus (strain ZK / E33L)</name>
    <dbReference type="NCBI Taxonomy" id="288681"/>
    <lineage>
        <taxon>Bacteria</taxon>
        <taxon>Bacillati</taxon>
        <taxon>Bacillota</taxon>
        <taxon>Bacilli</taxon>
        <taxon>Bacillales</taxon>
        <taxon>Bacillaceae</taxon>
        <taxon>Bacillus</taxon>
        <taxon>Bacillus cereus group</taxon>
    </lineage>
</organism>
<dbReference type="EC" id="1.7.1.7" evidence="1"/>
<dbReference type="EMBL" id="CP000001">
    <property type="protein sequence ID" value="AAU20281.1"/>
    <property type="molecule type" value="Genomic_DNA"/>
</dbReference>
<dbReference type="RefSeq" id="WP_000432436.1">
    <property type="nucleotide sequence ID" value="NZ_CP009968.1"/>
</dbReference>
<dbReference type="SMR" id="Q630E8"/>
<dbReference type="KEGG" id="bcz:BCE33L5151"/>
<dbReference type="PATRIC" id="fig|288681.22.peg.190"/>
<dbReference type="Proteomes" id="UP000002612">
    <property type="component" value="Chromosome"/>
</dbReference>
<dbReference type="GO" id="GO:0005829">
    <property type="term" value="C:cytosol"/>
    <property type="evidence" value="ECO:0007669"/>
    <property type="project" value="TreeGrafter"/>
</dbReference>
<dbReference type="GO" id="GO:1902560">
    <property type="term" value="C:GMP reductase complex"/>
    <property type="evidence" value="ECO:0007669"/>
    <property type="project" value="InterPro"/>
</dbReference>
<dbReference type="GO" id="GO:0003920">
    <property type="term" value="F:GMP reductase activity"/>
    <property type="evidence" value="ECO:0007669"/>
    <property type="project" value="UniProtKB-UniRule"/>
</dbReference>
<dbReference type="GO" id="GO:0016627">
    <property type="term" value="F:oxidoreductase activity, acting on the CH-CH group of donors"/>
    <property type="evidence" value="ECO:0007669"/>
    <property type="project" value="InterPro"/>
</dbReference>
<dbReference type="GO" id="GO:0006207">
    <property type="term" value="P:'de novo' pyrimidine nucleobase biosynthetic process"/>
    <property type="evidence" value="ECO:0007669"/>
    <property type="project" value="InterPro"/>
</dbReference>
<dbReference type="GO" id="GO:0006163">
    <property type="term" value="P:purine nucleotide metabolic process"/>
    <property type="evidence" value="ECO:0007669"/>
    <property type="project" value="UniProtKB-UniRule"/>
</dbReference>
<dbReference type="CDD" id="cd00381">
    <property type="entry name" value="IMPDH"/>
    <property type="match status" value="1"/>
</dbReference>
<dbReference type="FunFam" id="3.20.20.70:FF:000079">
    <property type="entry name" value="GMP reductase"/>
    <property type="match status" value="1"/>
</dbReference>
<dbReference type="Gene3D" id="3.20.20.70">
    <property type="entry name" value="Aldolase class I"/>
    <property type="match status" value="1"/>
</dbReference>
<dbReference type="HAMAP" id="MF_01511">
    <property type="entry name" value="GMP_reduct_type2"/>
    <property type="match status" value="1"/>
</dbReference>
<dbReference type="InterPro" id="IPR013785">
    <property type="entry name" value="Aldolase_TIM"/>
</dbReference>
<dbReference type="InterPro" id="IPR001295">
    <property type="entry name" value="Dihydroorotate_DH_CS"/>
</dbReference>
<dbReference type="InterPro" id="IPR050139">
    <property type="entry name" value="GMP_reductase"/>
</dbReference>
<dbReference type="InterPro" id="IPR005994">
    <property type="entry name" value="GuaC_type_2"/>
</dbReference>
<dbReference type="InterPro" id="IPR015875">
    <property type="entry name" value="IMP_DH/GMP_Rdtase_CS"/>
</dbReference>
<dbReference type="InterPro" id="IPR001093">
    <property type="entry name" value="IMP_DH_GMPRt"/>
</dbReference>
<dbReference type="NCBIfam" id="TIGR01306">
    <property type="entry name" value="GMP_reduct_2"/>
    <property type="match status" value="1"/>
</dbReference>
<dbReference type="NCBIfam" id="NF003966">
    <property type="entry name" value="PRK05458.1"/>
    <property type="match status" value="1"/>
</dbReference>
<dbReference type="PANTHER" id="PTHR43170">
    <property type="entry name" value="GMP REDUCTASE"/>
    <property type="match status" value="1"/>
</dbReference>
<dbReference type="PANTHER" id="PTHR43170:SF5">
    <property type="entry name" value="GMP REDUCTASE"/>
    <property type="match status" value="1"/>
</dbReference>
<dbReference type="Pfam" id="PF00478">
    <property type="entry name" value="IMPDH"/>
    <property type="match status" value="1"/>
</dbReference>
<dbReference type="PIRSF" id="PIRSF036500">
    <property type="entry name" value="GMP_red_Firmic"/>
    <property type="match status" value="1"/>
</dbReference>
<dbReference type="SMART" id="SM01240">
    <property type="entry name" value="IMPDH"/>
    <property type="match status" value="1"/>
</dbReference>
<dbReference type="SUPFAM" id="SSF51412">
    <property type="entry name" value="Inosine monophosphate dehydrogenase (IMPDH)"/>
    <property type="match status" value="1"/>
</dbReference>
<dbReference type="PROSITE" id="PS00487">
    <property type="entry name" value="IMP_DH_GMP_RED"/>
    <property type="match status" value="1"/>
</dbReference>
<keyword id="KW-0521">NADP</keyword>
<keyword id="KW-0560">Oxidoreductase</keyword>
<gene>
    <name evidence="1" type="primary">guaC</name>
    <name type="ordered locus">BCE33L5151</name>
</gene>
<name>GUAC_BACCZ</name>
<comment type="function">
    <text evidence="1">Catalyzes the irreversible NADPH-dependent deamination of GMP to IMP. It functions in the conversion of nucleobase, nucleoside and nucleotide derivatives of G to A nucleotides, and in maintaining the intracellular balance of A and G nucleotides.</text>
</comment>
<comment type="catalytic activity">
    <reaction evidence="1">
        <text>IMP + NH4(+) + NADP(+) = GMP + NADPH + 2 H(+)</text>
        <dbReference type="Rhea" id="RHEA:17185"/>
        <dbReference type="ChEBI" id="CHEBI:15378"/>
        <dbReference type="ChEBI" id="CHEBI:28938"/>
        <dbReference type="ChEBI" id="CHEBI:57783"/>
        <dbReference type="ChEBI" id="CHEBI:58053"/>
        <dbReference type="ChEBI" id="CHEBI:58115"/>
        <dbReference type="ChEBI" id="CHEBI:58349"/>
        <dbReference type="EC" id="1.7.1.7"/>
    </reaction>
</comment>
<comment type="similarity">
    <text evidence="1">Belongs to the IMPDH/GMPR family. GuaC type 2 subfamily.</text>
</comment>
<protein>
    <recommendedName>
        <fullName evidence="1">GMP reductase</fullName>
        <ecNumber evidence="1">1.7.1.7</ecNumber>
    </recommendedName>
    <alternativeName>
        <fullName evidence="1">Guanosine 5'-monophosphate oxidoreductase</fullName>
        <shortName evidence="1">Guanosine monophosphate reductase</shortName>
    </alternativeName>
</protein>
<proteinExistence type="inferred from homology"/>
<accession>Q630E8</accession>
<reference key="1">
    <citation type="journal article" date="2006" name="J. Bacteriol.">
        <title>Pathogenomic sequence analysis of Bacillus cereus and Bacillus thuringiensis isolates closely related to Bacillus anthracis.</title>
        <authorList>
            <person name="Han C.S."/>
            <person name="Xie G."/>
            <person name="Challacombe J.F."/>
            <person name="Altherr M.R."/>
            <person name="Bhotika S.S."/>
            <person name="Bruce D."/>
            <person name="Campbell C.S."/>
            <person name="Campbell M.L."/>
            <person name="Chen J."/>
            <person name="Chertkov O."/>
            <person name="Cleland C."/>
            <person name="Dimitrijevic M."/>
            <person name="Doggett N.A."/>
            <person name="Fawcett J.J."/>
            <person name="Glavina T."/>
            <person name="Goodwin L.A."/>
            <person name="Hill K.K."/>
            <person name="Hitchcock P."/>
            <person name="Jackson P.J."/>
            <person name="Keim P."/>
            <person name="Kewalramani A.R."/>
            <person name="Longmire J."/>
            <person name="Lucas S."/>
            <person name="Malfatti S."/>
            <person name="McMurry K."/>
            <person name="Meincke L.J."/>
            <person name="Misra M."/>
            <person name="Moseman B.L."/>
            <person name="Mundt M."/>
            <person name="Munk A.C."/>
            <person name="Okinaka R.T."/>
            <person name="Parson-Quintana B."/>
            <person name="Reilly L.P."/>
            <person name="Richardson P."/>
            <person name="Robinson D.L."/>
            <person name="Rubin E."/>
            <person name="Saunders E."/>
            <person name="Tapia R."/>
            <person name="Tesmer J.G."/>
            <person name="Thayer N."/>
            <person name="Thompson L.S."/>
            <person name="Tice H."/>
            <person name="Ticknor L.O."/>
            <person name="Wills P.L."/>
            <person name="Brettin T.S."/>
            <person name="Gilna P."/>
        </authorList>
    </citation>
    <scope>NUCLEOTIDE SEQUENCE [LARGE SCALE GENOMIC DNA]</scope>
    <source>
        <strain>ZK / E33L</strain>
    </source>
</reference>
<sequence>MENVFDYEDIQLIPAKCIVNSRSECDTTVTLGKHKFKLPVVPANMQTIIDERIATYLAENNYFYIMHRFQPEKRISFIRDMQSRGLIASISVGVKEDEYEFVQQLAAEHLTPEYITIDIAHGHSNAVINMIQHIKKHLPESFVIAGNVGTPEAVRELENAGADATKVGIGPGKVCITKIKTGFGTGGWQLAALRWCAKAASKPIIADGGIRTNGDVAKSIRFGATMVMIGSLFAGHEESPGETIEKDGKLYKEYFGSASEFQKGEKKNVEGKKMFVEHKGSLEDTLIEMEQDLQSSISYAGGTKLDSIRTVDYVVVKNSIFNGDKVY</sequence>
<evidence type="ECO:0000255" key="1">
    <source>
        <dbReference type="HAMAP-Rule" id="MF_01511"/>
    </source>
</evidence>